<proteinExistence type="inferred from homology"/>
<reference key="1">
    <citation type="submission" date="2007-10" db="EMBL/GenBank/DDBJ databases">
        <title>Complete sequence of Desulfococcus oleovorans Hxd3.</title>
        <authorList>
            <consortium name="US DOE Joint Genome Institute"/>
            <person name="Copeland A."/>
            <person name="Lucas S."/>
            <person name="Lapidus A."/>
            <person name="Barry K."/>
            <person name="Glavina del Rio T."/>
            <person name="Dalin E."/>
            <person name="Tice H."/>
            <person name="Pitluck S."/>
            <person name="Kiss H."/>
            <person name="Brettin T."/>
            <person name="Bruce D."/>
            <person name="Detter J.C."/>
            <person name="Han C."/>
            <person name="Schmutz J."/>
            <person name="Larimer F."/>
            <person name="Land M."/>
            <person name="Hauser L."/>
            <person name="Kyrpides N."/>
            <person name="Kim E."/>
            <person name="Wawrik B."/>
            <person name="Richardson P."/>
        </authorList>
    </citation>
    <scope>NUCLEOTIDE SEQUENCE [LARGE SCALE GENOMIC DNA]</scope>
    <source>
        <strain>DSM 6200 / JCM 39069 / Hxd3</strain>
    </source>
</reference>
<feature type="chain" id="PRO_1000194154" description="Small ribosomal subunit protein uS12">
    <location>
        <begin position="1"/>
        <end position="123"/>
    </location>
</feature>
<feature type="region of interest" description="Disordered" evidence="3">
    <location>
        <begin position="9"/>
        <end position="28"/>
    </location>
</feature>
<feature type="compositionally biased region" description="Low complexity" evidence="3">
    <location>
        <begin position="18"/>
        <end position="27"/>
    </location>
</feature>
<feature type="modified residue" description="3-methylthioaspartic acid" evidence="1">
    <location>
        <position position="89"/>
    </location>
</feature>
<protein>
    <recommendedName>
        <fullName evidence="2">Small ribosomal subunit protein uS12</fullName>
    </recommendedName>
    <alternativeName>
        <fullName evidence="4">30S ribosomal protein S12</fullName>
    </alternativeName>
</protein>
<gene>
    <name evidence="2" type="primary">rpsL</name>
    <name type="ordered locus">Dole_0704</name>
</gene>
<evidence type="ECO:0000250" key="1"/>
<evidence type="ECO:0000255" key="2">
    <source>
        <dbReference type="HAMAP-Rule" id="MF_00403"/>
    </source>
</evidence>
<evidence type="ECO:0000256" key="3">
    <source>
        <dbReference type="SAM" id="MobiDB-lite"/>
    </source>
</evidence>
<evidence type="ECO:0000305" key="4"/>
<name>RS12_DESOH</name>
<keyword id="KW-0488">Methylation</keyword>
<keyword id="KW-1185">Reference proteome</keyword>
<keyword id="KW-0687">Ribonucleoprotein</keyword>
<keyword id="KW-0689">Ribosomal protein</keyword>
<keyword id="KW-0694">RNA-binding</keyword>
<keyword id="KW-0699">rRNA-binding</keyword>
<keyword id="KW-0820">tRNA-binding</keyword>
<organism>
    <name type="scientific">Desulfosudis oleivorans (strain DSM 6200 / JCM 39069 / Hxd3)</name>
    <name type="common">Desulfococcus oleovorans</name>
    <dbReference type="NCBI Taxonomy" id="96561"/>
    <lineage>
        <taxon>Bacteria</taxon>
        <taxon>Pseudomonadati</taxon>
        <taxon>Thermodesulfobacteriota</taxon>
        <taxon>Desulfobacteria</taxon>
        <taxon>Desulfobacterales</taxon>
        <taxon>Desulfosudaceae</taxon>
        <taxon>Desulfosudis</taxon>
    </lineage>
</organism>
<comment type="function">
    <text evidence="2">With S4 and S5 plays an important role in translational accuracy.</text>
</comment>
<comment type="function">
    <text evidence="2">Interacts with and stabilizes bases of the 16S rRNA that are involved in tRNA selection in the A site and with the mRNA backbone. Located at the interface of the 30S and 50S subunits, it traverses the body of the 30S subunit contacting proteins on the other side and probably holding the rRNA structure together. The combined cluster of proteins S8, S12 and S17 appears to hold together the shoulder and platform of the 30S subunit.</text>
</comment>
<comment type="subunit">
    <text evidence="2">Part of the 30S ribosomal subunit. Contacts proteins S8 and S17. May interact with IF1 in the 30S initiation complex.</text>
</comment>
<comment type="similarity">
    <text evidence="2">Belongs to the universal ribosomal protein uS12 family.</text>
</comment>
<accession>A8ZV53</accession>
<dbReference type="EMBL" id="CP000859">
    <property type="protein sequence ID" value="ABW66514.1"/>
    <property type="molecule type" value="Genomic_DNA"/>
</dbReference>
<dbReference type="RefSeq" id="WP_012174133.1">
    <property type="nucleotide sequence ID" value="NC_009943.1"/>
</dbReference>
<dbReference type="SMR" id="A8ZV53"/>
<dbReference type="STRING" id="96561.Dole_0704"/>
<dbReference type="KEGG" id="dol:Dole_0704"/>
<dbReference type="eggNOG" id="COG0048">
    <property type="taxonomic scope" value="Bacteria"/>
</dbReference>
<dbReference type="HOGENOM" id="CLU_104295_1_2_7"/>
<dbReference type="OrthoDB" id="9802366at2"/>
<dbReference type="Proteomes" id="UP000008561">
    <property type="component" value="Chromosome"/>
</dbReference>
<dbReference type="GO" id="GO:0015935">
    <property type="term" value="C:small ribosomal subunit"/>
    <property type="evidence" value="ECO:0007669"/>
    <property type="project" value="InterPro"/>
</dbReference>
<dbReference type="GO" id="GO:0019843">
    <property type="term" value="F:rRNA binding"/>
    <property type="evidence" value="ECO:0007669"/>
    <property type="project" value="UniProtKB-UniRule"/>
</dbReference>
<dbReference type="GO" id="GO:0003735">
    <property type="term" value="F:structural constituent of ribosome"/>
    <property type="evidence" value="ECO:0007669"/>
    <property type="project" value="InterPro"/>
</dbReference>
<dbReference type="GO" id="GO:0000049">
    <property type="term" value="F:tRNA binding"/>
    <property type="evidence" value="ECO:0007669"/>
    <property type="project" value="UniProtKB-UniRule"/>
</dbReference>
<dbReference type="GO" id="GO:0006412">
    <property type="term" value="P:translation"/>
    <property type="evidence" value="ECO:0007669"/>
    <property type="project" value="UniProtKB-UniRule"/>
</dbReference>
<dbReference type="CDD" id="cd03368">
    <property type="entry name" value="Ribosomal_S12"/>
    <property type="match status" value="1"/>
</dbReference>
<dbReference type="FunFam" id="2.40.50.140:FF:000001">
    <property type="entry name" value="30S ribosomal protein S12"/>
    <property type="match status" value="1"/>
</dbReference>
<dbReference type="Gene3D" id="2.40.50.140">
    <property type="entry name" value="Nucleic acid-binding proteins"/>
    <property type="match status" value="1"/>
</dbReference>
<dbReference type="HAMAP" id="MF_00403_B">
    <property type="entry name" value="Ribosomal_uS12_B"/>
    <property type="match status" value="1"/>
</dbReference>
<dbReference type="InterPro" id="IPR012340">
    <property type="entry name" value="NA-bd_OB-fold"/>
</dbReference>
<dbReference type="InterPro" id="IPR006032">
    <property type="entry name" value="Ribosomal_uS12"/>
</dbReference>
<dbReference type="InterPro" id="IPR005679">
    <property type="entry name" value="Ribosomal_uS12_bac"/>
</dbReference>
<dbReference type="NCBIfam" id="TIGR00981">
    <property type="entry name" value="rpsL_bact"/>
    <property type="match status" value="1"/>
</dbReference>
<dbReference type="PANTHER" id="PTHR11652">
    <property type="entry name" value="30S RIBOSOMAL PROTEIN S12 FAMILY MEMBER"/>
    <property type="match status" value="1"/>
</dbReference>
<dbReference type="Pfam" id="PF00164">
    <property type="entry name" value="Ribosom_S12_S23"/>
    <property type="match status" value="1"/>
</dbReference>
<dbReference type="PIRSF" id="PIRSF002133">
    <property type="entry name" value="Ribosomal_S12/S23"/>
    <property type="match status" value="1"/>
</dbReference>
<dbReference type="PRINTS" id="PR01034">
    <property type="entry name" value="RIBOSOMALS12"/>
</dbReference>
<dbReference type="SUPFAM" id="SSF50249">
    <property type="entry name" value="Nucleic acid-binding proteins"/>
    <property type="match status" value="1"/>
</dbReference>
<dbReference type="PROSITE" id="PS00055">
    <property type="entry name" value="RIBOSOMAL_S12"/>
    <property type="match status" value="1"/>
</dbReference>
<sequence length="123" mass="13579">MPTINQLVRNGRKRATKKTTTPALKGAPQKRGVCVRVYTTTPKKPNSALRKVARVRLTTGIEVTAYIPGIGHNLQEHSVVLVRGGRVKDLPGVRYHIVRGTLDTLGVSDRKQGRSKYGTKRPK</sequence>